<protein>
    <recommendedName>
        <fullName evidence="1">Potassium-transporting ATPase potassium-binding subunit</fullName>
    </recommendedName>
    <alternativeName>
        <fullName evidence="1">ATP phosphohydrolase [potassium-transporting] A chain</fullName>
    </alternativeName>
    <alternativeName>
        <fullName evidence="1">Potassium-binding and translocating subunit A</fullName>
    </alternativeName>
    <alternativeName>
        <fullName evidence="1">Potassium-translocating ATPase A chain</fullName>
    </alternativeName>
</protein>
<comment type="function">
    <text evidence="1">Part of the high-affinity ATP-driven potassium transport (or Kdp) system, which catalyzes the hydrolysis of ATP coupled with the electrogenic transport of potassium into the cytoplasm. This subunit binds the periplasmic potassium ions and delivers the ions to the membrane domain of KdpB through an intramembrane tunnel.</text>
</comment>
<comment type="subunit">
    <text evidence="1">The system is composed of three essential subunits: KdpA, KdpB and KdpC.</text>
</comment>
<comment type="subcellular location">
    <subcellularLocation>
        <location evidence="1">Cell inner membrane</location>
        <topology evidence="1">Multi-pass membrane protein</topology>
    </subcellularLocation>
</comment>
<comment type="similarity">
    <text evidence="1">Belongs to the KdpA family.</text>
</comment>
<gene>
    <name evidence="1" type="primary">kdpA</name>
    <name type="ordered locus">MAE_59800</name>
</gene>
<dbReference type="EMBL" id="AP009552">
    <property type="protein sequence ID" value="BAG05802.1"/>
    <property type="molecule type" value="Genomic_DNA"/>
</dbReference>
<dbReference type="RefSeq" id="WP_012268152.1">
    <property type="nucleotide sequence ID" value="NC_010296.1"/>
</dbReference>
<dbReference type="SMR" id="B0JJ94"/>
<dbReference type="STRING" id="449447.MAE_59800"/>
<dbReference type="PaxDb" id="449447-MAE_59800"/>
<dbReference type="EnsemblBacteria" id="BAG05802">
    <property type="protein sequence ID" value="BAG05802"/>
    <property type="gene ID" value="MAE_59800"/>
</dbReference>
<dbReference type="KEGG" id="mar:MAE_59800"/>
<dbReference type="PATRIC" id="fig|449447.4.peg.5479"/>
<dbReference type="eggNOG" id="COG2060">
    <property type="taxonomic scope" value="Bacteria"/>
</dbReference>
<dbReference type="HOGENOM" id="CLU_018614_3_0_3"/>
<dbReference type="BioCyc" id="MAER449447:MAE_RS26090-MONOMER"/>
<dbReference type="Proteomes" id="UP000001510">
    <property type="component" value="Chromosome"/>
</dbReference>
<dbReference type="GO" id="GO:0005886">
    <property type="term" value="C:plasma membrane"/>
    <property type="evidence" value="ECO:0007669"/>
    <property type="project" value="UniProtKB-SubCell"/>
</dbReference>
<dbReference type="GO" id="GO:0008556">
    <property type="term" value="F:P-type potassium transmembrane transporter activity"/>
    <property type="evidence" value="ECO:0007669"/>
    <property type="project" value="InterPro"/>
</dbReference>
<dbReference type="GO" id="GO:0030955">
    <property type="term" value="F:potassium ion binding"/>
    <property type="evidence" value="ECO:0007669"/>
    <property type="project" value="UniProtKB-UniRule"/>
</dbReference>
<dbReference type="HAMAP" id="MF_00275">
    <property type="entry name" value="KdpA"/>
    <property type="match status" value="1"/>
</dbReference>
<dbReference type="InterPro" id="IPR004623">
    <property type="entry name" value="KdpA"/>
</dbReference>
<dbReference type="NCBIfam" id="TIGR00680">
    <property type="entry name" value="kdpA"/>
    <property type="match status" value="1"/>
</dbReference>
<dbReference type="PANTHER" id="PTHR30607">
    <property type="entry name" value="POTASSIUM-TRANSPORTING ATPASE A CHAIN"/>
    <property type="match status" value="1"/>
</dbReference>
<dbReference type="PANTHER" id="PTHR30607:SF2">
    <property type="entry name" value="POTASSIUM-TRANSPORTING ATPASE POTASSIUM-BINDING SUBUNIT"/>
    <property type="match status" value="1"/>
</dbReference>
<dbReference type="Pfam" id="PF03814">
    <property type="entry name" value="KdpA"/>
    <property type="match status" value="1"/>
</dbReference>
<dbReference type="PIRSF" id="PIRSF001294">
    <property type="entry name" value="K_ATPaseA"/>
    <property type="match status" value="1"/>
</dbReference>
<organism>
    <name type="scientific">Microcystis aeruginosa (strain NIES-843 / IAM M-2473)</name>
    <dbReference type="NCBI Taxonomy" id="449447"/>
    <lineage>
        <taxon>Bacteria</taxon>
        <taxon>Bacillati</taxon>
        <taxon>Cyanobacteriota</taxon>
        <taxon>Cyanophyceae</taxon>
        <taxon>Oscillatoriophycideae</taxon>
        <taxon>Chroococcales</taxon>
        <taxon>Microcystaceae</taxon>
        <taxon>Microcystis</taxon>
    </lineage>
</organism>
<feature type="chain" id="PRO_1000114693" description="Potassium-transporting ATPase potassium-binding subunit">
    <location>
        <begin position="1"/>
        <end position="581"/>
    </location>
</feature>
<feature type="transmembrane region" description="Helical" evidence="1">
    <location>
        <begin position="2"/>
        <end position="22"/>
    </location>
</feature>
<feature type="transmembrane region" description="Helical" evidence="1">
    <location>
        <begin position="74"/>
        <end position="94"/>
    </location>
</feature>
<feature type="transmembrane region" description="Helical" evidence="1">
    <location>
        <begin position="135"/>
        <end position="155"/>
    </location>
</feature>
<feature type="transmembrane region" description="Helical" evidence="1">
    <location>
        <begin position="177"/>
        <end position="197"/>
    </location>
</feature>
<feature type="transmembrane region" description="Helical" evidence="1">
    <location>
        <begin position="255"/>
        <end position="275"/>
    </location>
</feature>
<feature type="transmembrane region" description="Helical" evidence="1">
    <location>
        <begin position="284"/>
        <end position="304"/>
    </location>
</feature>
<feature type="transmembrane region" description="Helical" evidence="1">
    <location>
        <begin position="332"/>
        <end position="352"/>
    </location>
</feature>
<feature type="transmembrane region" description="Helical" evidence="1">
    <location>
        <begin position="357"/>
        <end position="377"/>
    </location>
</feature>
<feature type="transmembrane region" description="Helical" evidence="1">
    <location>
        <begin position="381"/>
        <end position="401"/>
    </location>
</feature>
<feature type="transmembrane region" description="Helical" evidence="1">
    <location>
        <begin position="421"/>
        <end position="441"/>
    </location>
</feature>
<feature type="transmembrane region" description="Helical" evidence="1">
    <location>
        <begin position="501"/>
        <end position="521"/>
    </location>
</feature>
<feature type="transmembrane region" description="Helical" evidence="1">
    <location>
        <begin position="550"/>
        <end position="570"/>
    </location>
</feature>
<keyword id="KW-0997">Cell inner membrane</keyword>
<keyword id="KW-1003">Cell membrane</keyword>
<keyword id="KW-0406">Ion transport</keyword>
<keyword id="KW-0472">Membrane</keyword>
<keyword id="KW-0630">Potassium</keyword>
<keyword id="KW-0633">Potassium transport</keyword>
<keyword id="KW-0812">Transmembrane</keyword>
<keyword id="KW-1133">Transmembrane helix</keyword>
<keyword id="KW-0813">Transport</keyword>
<proteinExistence type="inferred from homology"/>
<reference key="1">
    <citation type="journal article" date="2007" name="DNA Res.">
        <title>Complete genomic structure of the bloom-forming toxic cyanobacterium Microcystis aeruginosa NIES-843.</title>
        <authorList>
            <person name="Kaneko T."/>
            <person name="Nakajima N."/>
            <person name="Okamoto S."/>
            <person name="Suzuki I."/>
            <person name="Tanabe Y."/>
            <person name="Tamaoki M."/>
            <person name="Nakamura Y."/>
            <person name="Kasai F."/>
            <person name="Watanabe A."/>
            <person name="Kawashima K."/>
            <person name="Kishida Y."/>
            <person name="Ono A."/>
            <person name="Shimizu Y."/>
            <person name="Takahashi C."/>
            <person name="Minami C."/>
            <person name="Fujishiro T."/>
            <person name="Kohara M."/>
            <person name="Katoh M."/>
            <person name="Nakazaki N."/>
            <person name="Nakayama S."/>
            <person name="Yamada M."/>
            <person name="Tabata S."/>
            <person name="Watanabe M.M."/>
        </authorList>
    </citation>
    <scope>NUCLEOTIDE SEQUENCE [LARGE SCALE GENOMIC DNA]</scope>
    <source>
        <strain>NIES-843 / IAM M-247</strain>
    </source>
</reference>
<sequence length="581" mass="61895">MLQGWIQIALTILIIVAITPFFGRYMARVFMERRTLLDPLCDRVESLLYTFVGVKGKENMTGWQYTRAVLYSNAVIAILVFSLIAGQGVLPLNPTGIPAPSWDTTLHTTISFITNSDQQHYSGETTLSYGSQIWGLGYQMFTSAGTGLAVGIAFIRGLTGRPLGNFYVDLIRAITRILLPISIVGAIALIIAGVPETLAGPAILPTLENPNLSQAIARGPVAHFEIIKELGENGGGFFASNSAHPFENPNGFVNLVQLVAILSIPTSLIYTYGVFADNLKQARLIYLIPLGIFIGFTIITAIGEYNGNQAVNSLLGVERAVNFEGKEVRFGWAQSALYAVTTTATMCGAVIAMHDSLMPNGGFATLSNLFLQIVFGGQGTGTAYLFAYLILAVFVTGLMVGRTPEFLGRKIEKREVVLASFLILLVHPIAILIPGAIALAFPDFQGISNPGFHGLSQVIYEYASAAANNGSGFEGLGDSQPAPLAIAAGAKPTITALWWNLSACFSLLAGRYIPIAALLLLADGMSRKQPVPATTGTLRTDTGLFTSVTAGVILILGALTFLPILALGPIAEAFQITRMIG</sequence>
<evidence type="ECO:0000255" key="1">
    <source>
        <dbReference type="HAMAP-Rule" id="MF_00275"/>
    </source>
</evidence>
<name>KDPA_MICAN</name>
<accession>B0JJ94</accession>